<accession>Q6CXR4</accession>
<keyword id="KW-0010">Activator</keyword>
<keyword id="KW-0158">Chromosome</keyword>
<keyword id="KW-0539">Nucleus</keyword>
<keyword id="KW-1185">Reference proteome</keyword>
<keyword id="KW-0779">Telomere</keyword>
<keyword id="KW-0804">Transcription</keyword>
<keyword id="KW-0805">Transcription regulation</keyword>
<keyword id="KW-0819">tRNA processing</keyword>
<sequence length="119" mass="13465">MSLPHATYTGPKSTHEFEVDPSDPRYQTTEGRTTGASDYVLKQGHQDVDKPSDPKKVDNVNSKTGIDQYTTLSQLRMQLTGLQDDINEYLTEKINHVKKPRNSKQEQEINDLLDGSEET</sequence>
<proteinExistence type="inferred from homology"/>
<feature type="chain" id="PRO_0000278923" description="EKC/KEOPS complex subunit GON7">
    <location>
        <begin position="1"/>
        <end position="119"/>
    </location>
</feature>
<feature type="region of interest" description="Disordered" evidence="2">
    <location>
        <begin position="1"/>
        <end position="62"/>
    </location>
</feature>
<feature type="region of interest" description="Disordered" evidence="2">
    <location>
        <begin position="97"/>
        <end position="119"/>
    </location>
</feature>
<feature type="compositionally biased region" description="Polar residues" evidence="2">
    <location>
        <begin position="25"/>
        <end position="36"/>
    </location>
</feature>
<feature type="compositionally biased region" description="Basic and acidic residues" evidence="2">
    <location>
        <begin position="44"/>
        <end position="58"/>
    </location>
</feature>
<feature type="compositionally biased region" description="Acidic residues" evidence="2">
    <location>
        <begin position="108"/>
        <end position="119"/>
    </location>
</feature>
<name>GON7_KLULA</name>
<gene>
    <name type="primary">GON7</name>
    <name type="ordered locus">KLLA0A06171g</name>
</gene>
<dbReference type="EMBL" id="CR382121">
    <property type="protein sequence ID" value="CAH02863.1"/>
    <property type="molecule type" value="Genomic_DNA"/>
</dbReference>
<dbReference type="RefSeq" id="XP_451275.1">
    <property type="nucleotide sequence ID" value="XM_451275.1"/>
</dbReference>
<dbReference type="SMR" id="Q6CXR4"/>
<dbReference type="FunCoup" id="Q6CXR4">
    <property type="interactions" value="40"/>
</dbReference>
<dbReference type="STRING" id="284590.Q6CXR4"/>
<dbReference type="PaxDb" id="284590-Q6CXR4"/>
<dbReference type="KEGG" id="kla:KLLA0_A06171g"/>
<dbReference type="eggNOG" id="ENOG502S429">
    <property type="taxonomic scope" value="Eukaryota"/>
</dbReference>
<dbReference type="HOGENOM" id="CLU_151420_1_0_1"/>
<dbReference type="InParanoid" id="Q6CXR4"/>
<dbReference type="OMA" id="QDHLNIF"/>
<dbReference type="Proteomes" id="UP000000598">
    <property type="component" value="Chromosome A"/>
</dbReference>
<dbReference type="GO" id="GO:0000781">
    <property type="term" value="C:chromosome, telomeric region"/>
    <property type="evidence" value="ECO:0007669"/>
    <property type="project" value="UniProtKB-SubCell"/>
</dbReference>
<dbReference type="GO" id="GO:0005634">
    <property type="term" value="C:nucleus"/>
    <property type="evidence" value="ECO:0007669"/>
    <property type="project" value="UniProtKB-SubCell"/>
</dbReference>
<dbReference type="GO" id="GO:0008033">
    <property type="term" value="P:tRNA processing"/>
    <property type="evidence" value="ECO:0007669"/>
    <property type="project" value="UniProtKB-KW"/>
</dbReference>
<dbReference type="InterPro" id="IPR014849">
    <property type="entry name" value="EKC/KEOPS_Gon7"/>
</dbReference>
<dbReference type="Pfam" id="PF08738">
    <property type="entry name" value="Gon7"/>
    <property type="match status" value="1"/>
</dbReference>
<reference key="1">
    <citation type="journal article" date="2004" name="Nature">
        <title>Genome evolution in yeasts.</title>
        <authorList>
            <person name="Dujon B."/>
            <person name="Sherman D."/>
            <person name="Fischer G."/>
            <person name="Durrens P."/>
            <person name="Casaregola S."/>
            <person name="Lafontaine I."/>
            <person name="de Montigny J."/>
            <person name="Marck C."/>
            <person name="Neuveglise C."/>
            <person name="Talla E."/>
            <person name="Goffard N."/>
            <person name="Frangeul L."/>
            <person name="Aigle M."/>
            <person name="Anthouard V."/>
            <person name="Babour A."/>
            <person name="Barbe V."/>
            <person name="Barnay S."/>
            <person name="Blanchin S."/>
            <person name="Beckerich J.-M."/>
            <person name="Beyne E."/>
            <person name="Bleykasten C."/>
            <person name="Boisrame A."/>
            <person name="Boyer J."/>
            <person name="Cattolico L."/>
            <person name="Confanioleri F."/>
            <person name="de Daruvar A."/>
            <person name="Despons L."/>
            <person name="Fabre E."/>
            <person name="Fairhead C."/>
            <person name="Ferry-Dumazet H."/>
            <person name="Groppi A."/>
            <person name="Hantraye F."/>
            <person name="Hennequin C."/>
            <person name="Jauniaux N."/>
            <person name="Joyet P."/>
            <person name="Kachouri R."/>
            <person name="Kerrest A."/>
            <person name="Koszul R."/>
            <person name="Lemaire M."/>
            <person name="Lesur I."/>
            <person name="Ma L."/>
            <person name="Muller H."/>
            <person name="Nicaud J.-M."/>
            <person name="Nikolski M."/>
            <person name="Oztas S."/>
            <person name="Ozier-Kalogeropoulos O."/>
            <person name="Pellenz S."/>
            <person name="Potier S."/>
            <person name="Richard G.-F."/>
            <person name="Straub M.-L."/>
            <person name="Suleau A."/>
            <person name="Swennen D."/>
            <person name="Tekaia F."/>
            <person name="Wesolowski-Louvel M."/>
            <person name="Westhof E."/>
            <person name="Wirth B."/>
            <person name="Zeniou-Meyer M."/>
            <person name="Zivanovic Y."/>
            <person name="Bolotin-Fukuhara M."/>
            <person name="Thierry A."/>
            <person name="Bouchier C."/>
            <person name="Caudron B."/>
            <person name="Scarpelli C."/>
            <person name="Gaillardin C."/>
            <person name="Weissenbach J."/>
            <person name="Wincker P."/>
            <person name="Souciet J.-L."/>
        </authorList>
    </citation>
    <scope>NUCLEOTIDE SEQUENCE [LARGE SCALE GENOMIC DNA]</scope>
    <source>
        <strain>ATCC 8585 / CBS 2359 / DSM 70799 / NBRC 1267 / NRRL Y-1140 / WM37</strain>
    </source>
</reference>
<comment type="function">
    <text evidence="1">Component of the EKC/KEOPS complex that is required for the formation of a threonylcarbamoyl group on adenosine at position 37 (t(6)A37) in tRNAs that read codons beginning with adenine. The complex is probably involved in the transfer of the threonylcarbamoyl moiety of threonylcarbamoyl-AMP (TC-AMP) to the N6 group of A37. GON7 likely plays a supporting role to the catalytic subunit KAE1 in the complex. The EKC/KEOPS complex also promotes both telomere uncapping and telomere elongation. The complex is required for efficient recruitment of transcriptional coactivators (By similarity).</text>
</comment>
<comment type="subunit">
    <text evidence="1">Component of the EKC/KEOPS complex composed of at least BUD32, CGI121, GON7, KAE1 and PCC1; the whole complex dimerizes.</text>
</comment>
<comment type="subcellular location">
    <subcellularLocation>
        <location evidence="1">Nucleus</location>
    </subcellularLocation>
    <subcellularLocation>
        <location evidence="1">Chromosome</location>
        <location evidence="1">Telomere</location>
    </subcellularLocation>
</comment>
<comment type="similarity">
    <text evidence="3">Belongs to the GON7 family.</text>
</comment>
<protein>
    <recommendedName>
        <fullName>EKC/KEOPS complex subunit GON7</fullName>
    </recommendedName>
</protein>
<evidence type="ECO:0000250" key="1"/>
<evidence type="ECO:0000256" key="2">
    <source>
        <dbReference type="SAM" id="MobiDB-lite"/>
    </source>
</evidence>
<evidence type="ECO:0000305" key="3"/>
<organism>
    <name type="scientific">Kluyveromyces lactis (strain ATCC 8585 / CBS 2359 / DSM 70799 / NBRC 1267 / NRRL Y-1140 / WM37)</name>
    <name type="common">Yeast</name>
    <name type="synonym">Candida sphaerica</name>
    <dbReference type="NCBI Taxonomy" id="284590"/>
    <lineage>
        <taxon>Eukaryota</taxon>
        <taxon>Fungi</taxon>
        <taxon>Dikarya</taxon>
        <taxon>Ascomycota</taxon>
        <taxon>Saccharomycotina</taxon>
        <taxon>Saccharomycetes</taxon>
        <taxon>Saccharomycetales</taxon>
        <taxon>Saccharomycetaceae</taxon>
        <taxon>Kluyveromyces</taxon>
    </lineage>
</organism>